<comment type="function">
    <text evidence="1">Modulates transcription in response to changes in cellular NADH/NAD(+) redox state.</text>
</comment>
<comment type="subunit">
    <text evidence="1">Homodimer.</text>
</comment>
<comment type="subcellular location">
    <subcellularLocation>
        <location evidence="1">Cytoplasm</location>
    </subcellularLocation>
</comment>
<comment type="similarity">
    <text evidence="1">Belongs to the transcriptional regulatory Rex family.</text>
</comment>
<reference key="1">
    <citation type="journal article" date="2007" name="J. Bacteriol.">
        <title>The complete genome sequence of the lactic acid bacterial paradigm Lactococcus lactis subsp. cremoris MG1363.</title>
        <authorList>
            <person name="Wegmann U."/>
            <person name="O'Connell-Motherway M."/>
            <person name="Zomer A."/>
            <person name="Buist G."/>
            <person name="Shearman C."/>
            <person name="Canchaya C."/>
            <person name="Ventura M."/>
            <person name="Goesmann A."/>
            <person name="Gasson M.J."/>
            <person name="Kuipers O.P."/>
            <person name="van Sinderen D."/>
            <person name="Kok J."/>
        </authorList>
    </citation>
    <scope>NUCLEOTIDE SEQUENCE [LARGE SCALE GENOMIC DNA]</scope>
    <source>
        <strain>MG1363</strain>
    </source>
</reference>
<dbReference type="EMBL" id="AM406671">
    <property type="protein sequence ID" value="CAL98090.1"/>
    <property type="molecule type" value="Genomic_DNA"/>
</dbReference>
<dbReference type="RefSeq" id="WP_011835356.1">
    <property type="nucleotide sequence ID" value="NC_009004.1"/>
</dbReference>
<dbReference type="SMR" id="A2RLC3"/>
<dbReference type="STRING" id="416870.llmg_1514"/>
<dbReference type="GeneID" id="61109307"/>
<dbReference type="KEGG" id="llm:llmg_1514"/>
<dbReference type="eggNOG" id="COG2344">
    <property type="taxonomic scope" value="Bacteria"/>
</dbReference>
<dbReference type="HOGENOM" id="CLU_061534_1_1_9"/>
<dbReference type="OrthoDB" id="9784760at2"/>
<dbReference type="PhylomeDB" id="A2RLC3"/>
<dbReference type="Proteomes" id="UP000000364">
    <property type="component" value="Chromosome"/>
</dbReference>
<dbReference type="GO" id="GO:0005737">
    <property type="term" value="C:cytoplasm"/>
    <property type="evidence" value="ECO:0007669"/>
    <property type="project" value="UniProtKB-SubCell"/>
</dbReference>
<dbReference type="GO" id="GO:0003677">
    <property type="term" value="F:DNA binding"/>
    <property type="evidence" value="ECO:0007669"/>
    <property type="project" value="UniProtKB-UniRule"/>
</dbReference>
<dbReference type="GO" id="GO:0003700">
    <property type="term" value="F:DNA-binding transcription factor activity"/>
    <property type="evidence" value="ECO:0007669"/>
    <property type="project" value="UniProtKB-UniRule"/>
</dbReference>
<dbReference type="GO" id="GO:0045892">
    <property type="term" value="P:negative regulation of DNA-templated transcription"/>
    <property type="evidence" value="ECO:0007669"/>
    <property type="project" value="InterPro"/>
</dbReference>
<dbReference type="GO" id="GO:0051775">
    <property type="term" value="P:response to redox state"/>
    <property type="evidence" value="ECO:0007669"/>
    <property type="project" value="InterPro"/>
</dbReference>
<dbReference type="Gene3D" id="3.40.50.720">
    <property type="entry name" value="NAD(P)-binding Rossmann-like Domain"/>
    <property type="match status" value="1"/>
</dbReference>
<dbReference type="Gene3D" id="1.10.10.10">
    <property type="entry name" value="Winged helix-like DNA-binding domain superfamily/Winged helix DNA-binding domain"/>
    <property type="match status" value="1"/>
</dbReference>
<dbReference type="HAMAP" id="MF_01131">
    <property type="entry name" value="Rex"/>
    <property type="match status" value="1"/>
</dbReference>
<dbReference type="InterPro" id="IPR003781">
    <property type="entry name" value="CoA-bd"/>
</dbReference>
<dbReference type="InterPro" id="IPR036291">
    <property type="entry name" value="NAD(P)-bd_dom_sf"/>
</dbReference>
<dbReference type="InterPro" id="IPR009718">
    <property type="entry name" value="Rex_DNA-bd_C_dom"/>
</dbReference>
<dbReference type="InterPro" id="IPR022876">
    <property type="entry name" value="Tscrpt_rep_Rex"/>
</dbReference>
<dbReference type="InterPro" id="IPR036388">
    <property type="entry name" value="WH-like_DNA-bd_sf"/>
</dbReference>
<dbReference type="InterPro" id="IPR036390">
    <property type="entry name" value="WH_DNA-bd_sf"/>
</dbReference>
<dbReference type="NCBIfam" id="NF003989">
    <property type="entry name" value="PRK05472.1-3"/>
    <property type="match status" value="1"/>
</dbReference>
<dbReference type="NCBIfam" id="NF003991">
    <property type="entry name" value="PRK05472.1-5"/>
    <property type="match status" value="1"/>
</dbReference>
<dbReference type="NCBIfam" id="NF003994">
    <property type="entry name" value="PRK05472.2-3"/>
    <property type="match status" value="1"/>
</dbReference>
<dbReference type="NCBIfam" id="NF003995">
    <property type="entry name" value="PRK05472.2-4"/>
    <property type="match status" value="1"/>
</dbReference>
<dbReference type="NCBIfam" id="NF003996">
    <property type="entry name" value="PRK05472.2-5"/>
    <property type="match status" value="1"/>
</dbReference>
<dbReference type="PANTHER" id="PTHR35786">
    <property type="entry name" value="REDOX-SENSING TRANSCRIPTIONAL REPRESSOR REX"/>
    <property type="match status" value="1"/>
</dbReference>
<dbReference type="PANTHER" id="PTHR35786:SF1">
    <property type="entry name" value="REDOX-SENSING TRANSCRIPTIONAL REPRESSOR REX 1"/>
    <property type="match status" value="1"/>
</dbReference>
<dbReference type="Pfam" id="PF02629">
    <property type="entry name" value="CoA_binding"/>
    <property type="match status" value="1"/>
</dbReference>
<dbReference type="Pfam" id="PF06971">
    <property type="entry name" value="Put_DNA-bind_N"/>
    <property type="match status" value="1"/>
</dbReference>
<dbReference type="SMART" id="SM00881">
    <property type="entry name" value="CoA_binding"/>
    <property type="match status" value="1"/>
</dbReference>
<dbReference type="SUPFAM" id="SSF51735">
    <property type="entry name" value="NAD(P)-binding Rossmann-fold domains"/>
    <property type="match status" value="1"/>
</dbReference>
<dbReference type="SUPFAM" id="SSF46785">
    <property type="entry name" value="Winged helix' DNA-binding domain"/>
    <property type="match status" value="1"/>
</dbReference>
<gene>
    <name evidence="1" type="primary">rex</name>
    <name type="ordered locus">llmg_1514</name>
</gene>
<evidence type="ECO:0000255" key="1">
    <source>
        <dbReference type="HAMAP-Rule" id="MF_01131"/>
    </source>
</evidence>
<sequence length="216" mass="24307">MTDHKPSKSLPKATAKRLPQYYRLFKSLVEENVTRTNSQLISEKIGVDAATIRRDFSLFGELGRRGYGYETKVLRDFFGELLGQDQETHIALIGVGNLGRALLHYQFQDRNKMRITQAYDISGNPLVGTQTDDGIPIYNISDLEKNVKKSDIKTAILSVRKENAQEVVDTLVKAGIKGFLNFAPIRLKVPSDVVVQSIDLTKELQTLLFFMGAQEE</sequence>
<protein>
    <recommendedName>
        <fullName evidence="1">Redox-sensing transcriptional repressor Rex</fullName>
    </recommendedName>
</protein>
<organism>
    <name type="scientific">Lactococcus lactis subsp. cremoris (strain MG1363)</name>
    <dbReference type="NCBI Taxonomy" id="416870"/>
    <lineage>
        <taxon>Bacteria</taxon>
        <taxon>Bacillati</taxon>
        <taxon>Bacillota</taxon>
        <taxon>Bacilli</taxon>
        <taxon>Lactobacillales</taxon>
        <taxon>Streptococcaceae</taxon>
        <taxon>Lactococcus</taxon>
        <taxon>Lactococcus cremoris subsp. cremoris</taxon>
    </lineage>
</organism>
<name>REX_LACLM</name>
<feature type="chain" id="PRO_1000065406" description="Redox-sensing transcriptional repressor Rex">
    <location>
        <begin position="1"/>
        <end position="216"/>
    </location>
</feature>
<feature type="DNA-binding region" description="H-T-H motif" evidence="1">
    <location>
        <begin position="20"/>
        <end position="59"/>
    </location>
</feature>
<feature type="binding site" evidence="1">
    <location>
        <begin position="94"/>
        <end position="99"/>
    </location>
    <ligand>
        <name>NAD(+)</name>
        <dbReference type="ChEBI" id="CHEBI:57540"/>
    </ligand>
</feature>
<keyword id="KW-0963">Cytoplasm</keyword>
<keyword id="KW-0238">DNA-binding</keyword>
<keyword id="KW-0520">NAD</keyword>
<keyword id="KW-0678">Repressor</keyword>
<keyword id="KW-0804">Transcription</keyword>
<keyword id="KW-0805">Transcription regulation</keyword>
<accession>A2RLC3</accession>
<proteinExistence type="inferred from homology"/>